<keyword id="KW-0325">Glycoprotein</keyword>
<keyword id="KW-1185">Reference proteome</keyword>
<keyword id="KW-0964">Secreted</keyword>
<keyword id="KW-0732">Signal</keyword>
<keyword id="KW-0758">Storage protein</keyword>
<comment type="function">
    <text evidence="1">Larval storage protein (LSP) which may serve as a store of amino acids for synthesis of adult proteins.</text>
</comment>
<comment type="subunit">
    <text evidence="4">Homohexamer.</text>
</comment>
<comment type="subcellular location">
    <subcellularLocation>
        <location evidence="1">Secreted</location>
        <location evidence="1">Extracellular space</location>
    </subcellularLocation>
    <text>Minor constituent of late larval hemolymph.</text>
</comment>
<comment type="tissue specificity">
    <text evidence="3">Larval fat body.</text>
</comment>
<comment type="developmental stage">
    <text evidence="3">First detected in fourth-instar larvae and disappears abruptly in early pupae.</text>
</comment>
<comment type="similarity">
    <text evidence="4">Belongs to the hemocyanin family.</text>
</comment>
<comment type="sequence caution" evidence="4">
    <conflict type="frameshift">
        <sequence resource="EMBL-CDS" id="AAA93477"/>
    </conflict>
</comment>
<sequence>MKLLILAVAISLAVLASGSYVPSTKFEAKYADKEFLFKQKFFFEVLRNIHLPLKYDEYIPYTKTWVSDETKYNDFAQVAEFFDYYKTGAFLEKGELFSIYNEQYLRQTYAVFTFLYNSADWDTYYKNMIWARDNINEGMFIYVLHLTVMHRPDLQGIVLPAIYEIYPYYFFNTDVIRTINYKKLYDPKFGFYGNGKYNVVYANYTATYPMDYYNNFYTEEYLNYYTEDIGLNACYYYFMMDYSFLLGGDKFGLIKDRRGELYWYMHQMLLARYNLERMSNYMGTVKPLVWRFPLKTGYFSLLSYWNGVPFKSRDYNYMISDESYFKLDWINAWEAKIRKIIEDGFFVKEDGTRINLRLPESVEFFGNLLNSNVDSVDANYVGYIEVFSRLLLSGNDFNAYKVWPSALMQFETSLRDPVFYQLYERFMDLYYYFKRFLPSYTYEELNFNGVVIKDVTFDKLMTYFDYFDSDVSNVLPMQSTDKYFDYAVFARQRRLNHKPFSYTMNVMSDYTGKAIIRAFVGPKFDRFFDLQFYKKYFFEIDQYLVDFTAGKNTFVRNSRDFYWSVKDRTMYTDLYKKIMLGYNGQEKFALDMSEAHCGFPDRLILPKGWTSGMPMQFYFIITPYTAKTYEQGYQYDKTFTCGVESGMRFYDSLPFGYPFDRVINFNYFYTKNMYFKDVFIFHTEEMKMNQRY</sequence>
<evidence type="ECO:0000250" key="1"/>
<evidence type="ECO:0000255" key="2"/>
<evidence type="ECO:0000269" key="3">
    <source>
    </source>
</evidence>
<evidence type="ECO:0000305" key="4"/>
<feature type="signal peptide" evidence="2">
    <location>
        <begin position="1"/>
        <end position="18"/>
    </location>
</feature>
<feature type="chain" id="PRO_0000013337" description="Hexamerin-1.1">
    <location>
        <begin position="19"/>
        <end position="692"/>
    </location>
</feature>
<feature type="glycosylation site" description="N-linked (GlcNAc...) asparagine" evidence="2">
    <location>
        <position position="203"/>
    </location>
</feature>
<feature type="sequence conflict" description="In Ref. 1; AAA96405 and 2; AAC31873/AAC31874/AAC31875." evidence="4" ref="1 2">
    <original>A</original>
    <variation>E</variation>
    <location>
        <position position="9"/>
    </location>
</feature>
<feature type="sequence conflict" description="In Ref. 2; AAC31874/AAC31875." evidence="4" ref="2">
    <original>D</original>
    <variation>N</variation>
    <location>
        <position position="186"/>
    </location>
</feature>
<feature type="sequence conflict" description="In Ref. 1; AAA96405 and 2; AAC31873." evidence="4" ref="1 2">
    <original>V</original>
    <variation>I</variation>
    <location>
        <position position="199"/>
    </location>
</feature>
<feature type="sequence conflict" description="In Ref. 1; AAA96405 and 2; AAC31874/AAC31875." evidence="4" ref="1 2">
    <original>Y</original>
    <variation>N</variation>
    <location>
        <position position="225"/>
    </location>
</feature>
<feature type="sequence conflict" description="In Ref. 1; AAA96405 and 2; AAC31873/AAC31874/AAC31875." evidence="4" ref="1 2">
    <original>C</original>
    <variation>Y</variation>
    <location>
        <position position="234"/>
    </location>
</feature>
<feature type="sequence conflict" description="In Ref. 1; AAA96405 and 2; AAC31873." evidence="4" ref="1 2">
    <original>F</original>
    <variation>Y</variation>
    <location>
        <position position="325"/>
    </location>
</feature>
<feature type="sequence conflict" description="In Ref. 2; AAC31873." evidence="4" ref="2">
    <original>T</original>
    <variation>A</variation>
    <location>
        <position position="480"/>
    </location>
</feature>
<feature type="sequence conflict" description="In Ref. 1; AAA96405 and 2; AAC31874/AAC31875." evidence="4" ref="1 2">
    <original>F</original>
    <variation>S</variation>
    <location>
        <position position="554"/>
    </location>
</feature>
<feature type="sequence conflict" description="In Ref. 2; AAC31874/AAC31875." evidence="4" ref="2">
    <original>S</original>
    <variation>N</variation>
    <location>
        <position position="652"/>
    </location>
</feature>
<feature type="sequence conflict" description="In Ref. 2; AAC31873." evidence="4" ref="2">
    <original>TE</original>
    <variation>ND</variation>
    <location>
        <begin position="683"/>
        <end position="684"/>
    </location>
</feature>
<feature type="sequence conflict" description="In Ref. 2; AAC31873." evidence="4" ref="2">
    <original>R</original>
    <variation>T</variation>
    <location>
        <position position="691"/>
    </location>
</feature>
<gene>
    <name type="primary">HexA</name>
</gene>
<dbReference type="EMBL" id="U51225">
    <property type="protein sequence ID" value="AAA96405.1"/>
    <property type="molecule type" value="mRNA"/>
</dbReference>
<dbReference type="EMBL" id="AF020870">
    <property type="protein sequence ID" value="AAC31873.1"/>
    <property type="molecule type" value="Genomic_DNA"/>
</dbReference>
<dbReference type="EMBL" id="AF020871">
    <property type="protein sequence ID" value="AAC31874.1"/>
    <property type="molecule type" value="Genomic_DNA"/>
</dbReference>
<dbReference type="EMBL" id="AF020872">
    <property type="protein sequence ID" value="AAC31875.1"/>
    <property type="molecule type" value="Genomic_DNA"/>
</dbReference>
<dbReference type="EMBL" id="AAAB01008960">
    <property type="status" value="NOT_ANNOTATED_CDS"/>
    <property type="molecule type" value="Genomic_DNA"/>
</dbReference>
<dbReference type="EMBL" id="AAAB01018287">
    <property type="status" value="NOT_ANNOTATED_CDS"/>
    <property type="molecule type" value="Genomic_DNA"/>
</dbReference>
<dbReference type="EMBL" id="U50475">
    <property type="protein sequence ID" value="AAA93477.1"/>
    <property type="status" value="ALT_FRAME"/>
    <property type="molecule type" value="mRNA"/>
</dbReference>
<dbReference type="SMR" id="Q17020"/>
<dbReference type="FunCoup" id="Q17020">
    <property type="interactions" value="16"/>
</dbReference>
<dbReference type="STRING" id="7165.Q17020"/>
<dbReference type="GlyCosmos" id="Q17020">
    <property type="glycosylation" value="1 site, No reported glycans"/>
</dbReference>
<dbReference type="VEuPathDB" id="VectorBase:AGAMI1_013034"/>
<dbReference type="VEuPathDB" id="VectorBase:AGAP005768"/>
<dbReference type="eggNOG" id="ENOG502QR98">
    <property type="taxonomic scope" value="Eukaryota"/>
</dbReference>
<dbReference type="HOGENOM" id="CLU_012213_1_0_1"/>
<dbReference type="InParanoid" id="Q17020"/>
<dbReference type="Proteomes" id="UP000007062">
    <property type="component" value="Chromosome 2L"/>
</dbReference>
<dbReference type="GO" id="GO:0005576">
    <property type="term" value="C:extracellular region"/>
    <property type="evidence" value="ECO:0007669"/>
    <property type="project" value="UniProtKB-SubCell"/>
</dbReference>
<dbReference type="GO" id="GO:0045735">
    <property type="term" value="F:nutrient reservoir activity"/>
    <property type="evidence" value="ECO:0007669"/>
    <property type="project" value="UniProtKB-KW"/>
</dbReference>
<dbReference type="Gene3D" id="1.10.1280.10">
    <property type="entry name" value="Di-copper center containing domain from catechol oxidase"/>
    <property type="match status" value="1"/>
</dbReference>
<dbReference type="Gene3D" id="2.60.40.1520">
    <property type="entry name" value="Hemocyanin, C-terminal domain"/>
    <property type="match status" value="1"/>
</dbReference>
<dbReference type="Gene3D" id="1.20.1370.10">
    <property type="entry name" value="Hemocyanin, N-terminal domain"/>
    <property type="match status" value="1"/>
</dbReference>
<dbReference type="InterPro" id="IPR008922">
    <property type="entry name" value="Di-copper_centre_dom_sf"/>
</dbReference>
<dbReference type="InterPro" id="IPR013788">
    <property type="entry name" value="Hemocyanin/hexamerin"/>
</dbReference>
<dbReference type="InterPro" id="IPR000896">
    <property type="entry name" value="Hemocyanin/hexamerin_mid_dom"/>
</dbReference>
<dbReference type="InterPro" id="IPR005203">
    <property type="entry name" value="Hemocyanin_C"/>
</dbReference>
<dbReference type="InterPro" id="IPR037020">
    <property type="entry name" value="Hemocyanin_C_sf"/>
</dbReference>
<dbReference type="InterPro" id="IPR005204">
    <property type="entry name" value="Hemocyanin_N"/>
</dbReference>
<dbReference type="InterPro" id="IPR036697">
    <property type="entry name" value="Hemocyanin_N_sf"/>
</dbReference>
<dbReference type="InterPro" id="IPR014756">
    <property type="entry name" value="Ig_E-set"/>
</dbReference>
<dbReference type="PANTHER" id="PTHR11511:SF5">
    <property type="entry name" value="FAT-BODY PROTEIN 1-RELATED"/>
    <property type="match status" value="1"/>
</dbReference>
<dbReference type="PANTHER" id="PTHR11511">
    <property type="entry name" value="LARVAL STORAGE PROTEIN/PHENOLOXIDASE"/>
    <property type="match status" value="1"/>
</dbReference>
<dbReference type="Pfam" id="PF03723">
    <property type="entry name" value="Hemocyanin_C"/>
    <property type="match status" value="1"/>
</dbReference>
<dbReference type="Pfam" id="PF00372">
    <property type="entry name" value="Hemocyanin_M"/>
    <property type="match status" value="1"/>
</dbReference>
<dbReference type="Pfam" id="PF03722">
    <property type="entry name" value="Hemocyanin_N"/>
    <property type="match status" value="1"/>
</dbReference>
<dbReference type="PRINTS" id="PR00187">
    <property type="entry name" value="HAEMOCYANIN"/>
</dbReference>
<dbReference type="SUPFAM" id="SSF48056">
    <property type="entry name" value="Di-copper centre-containing domain"/>
    <property type="match status" value="1"/>
</dbReference>
<dbReference type="SUPFAM" id="SSF81296">
    <property type="entry name" value="E set domains"/>
    <property type="match status" value="1"/>
</dbReference>
<dbReference type="SUPFAM" id="SSF48050">
    <property type="entry name" value="Hemocyanin, N-terminal domain"/>
    <property type="match status" value="1"/>
</dbReference>
<dbReference type="PROSITE" id="PS00210">
    <property type="entry name" value="HEMOCYANIN_2"/>
    <property type="match status" value="1"/>
</dbReference>
<accession>Q17020</accession>
<accession>O76209</accession>
<accession>O77461</accession>
<accession>Q17019</accession>
<organism>
    <name type="scientific">Anopheles gambiae</name>
    <name type="common">African malaria mosquito</name>
    <dbReference type="NCBI Taxonomy" id="7165"/>
    <lineage>
        <taxon>Eukaryota</taxon>
        <taxon>Metazoa</taxon>
        <taxon>Ecdysozoa</taxon>
        <taxon>Arthropoda</taxon>
        <taxon>Hexapoda</taxon>
        <taxon>Insecta</taxon>
        <taxon>Pterygota</taxon>
        <taxon>Neoptera</taxon>
        <taxon>Endopterygota</taxon>
        <taxon>Diptera</taxon>
        <taxon>Nematocera</taxon>
        <taxon>Culicoidea</taxon>
        <taxon>Culicidae</taxon>
        <taxon>Anophelinae</taxon>
        <taxon>Anopheles</taxon>
    </lineage>
</organism>
<name>HEXA_ANOGA</name>
<protein>
    <recommendedName>
        <fullName>Hexamerin-1.1</fullName>
        <shortName>HEX-1.1</shortName>
    </recommendedName>
    <alternativeName>
        <fullName>AgHex-1.1</fullName>
    </alternativeName>
    <alternativeName>
        <fullName>AgHexA</fullName>
    </alternativeName>
</protein>
<proteinExistence type="evidence at transcript level"/>
<reference key="1">
    <citation type="journal article" date="1997" name="Eur. J. Biochem.">
        <title>Molecular cloning and expression of a hexamerin cDNA from the malaria mosquito, Anopheles gambiae.</title>
        <authorList>
            <person name="Zakharkin S.O."/>
            <person name="Gordadze A.V."/>
            <person name="Korochkina S.E."/>
            <person name="Mathiopoulos K.D."/>
            <person name="della Torre A."/>
            <person name="Benes H."/>
        </authorList>
    </citation>
    <scope>NUCLEOTIDE SEQUENCE [MRNA]</scope>
    <scope>DEVELOPMENTAL STAGE</scope>
    <scope>TISSUE SPECIFICITY</scope>
</reference>
<reference key="2">
    <citation type="journal article" date="1998" name="Genetics">
        <title>Multiple origins of cytologically identical chromosome inversions in the Anopheles gambiae complex.</title>
        <authorList>
            <person name="Caccone A."/>
            <person name="Min G.-S."/>
            <person name="Powell J.R."/>
        </authorList>
    </citation>
    <scope>NUCLEOTIDE SEQUENCE [GENOMIC DNA]</scope>
    <source>
        <strain>Agbabilame</strain>
    </source>
</reference>
<reference key="3">
    <citation type="journal article" date="2002" name="Science">
        <title>The genome sequence of the malaria mosquito Anopheles gambiae.</title>
        <authorList>
            <person name="Holt R.A."/>
            <person name="Subramanian G.M."/>
            <person name="Halpern A."/>
            <person name="Sutton G.G."/>
            <person name="Charlab R."/>
            <person name="Nusskern D.R."/>
            <person name="Wincker P."/>
            <person name="Clark A.G."/>
            <person name="Ribeiro J.M.C."/>
            <person name="Wides R."/>
            <person name="Salzberg S.L."/>
            <person name="Loftus B.J."/>
            <person name="Yandell M.D."/>
            <person name="Majoros W.H."/>
            <person name="Rusch D.B."/>
            <person name="Lai Z."/>
            <person name="Kraft C.L."/>
            <person name="Abril J.F."/>
            <person name="Anthouard V."/>
            <person name="Arensburger P."/>
            <person name="Atkinson P.W."/>
            <person name="Baden H."/>
            <person name="de Berardinis V."/>
            <person name="Baldwin D."/>
            <person name="Benes V."/>
            <person name="Biedler J."/>
            <person name="Blass C."/>
            <person name="Bolanos R."/>
            <person name="Boscus D."/>
            <person name="Barnstead M."/>
            <person name="Cai S."/>
            <person name="Center A."/>
            <person name="Chaturverdi K."/>
            <person name="Christophides G.K."/>
            <person name="Chrystal M.A.M."/>
            <person name="Clamp M."/>
            <person name="Cravchik A."/>
            <person name="Curwen V."/>
            <person name="Dana A."/>
            <person name="Delcher A."/>
            <person name="Dew I."/>
            <person name="Evans C.A."/>
            <person name="Flanigan M."/>
            <person name="Grundschober-Freimoser A."/>
            <person name="Friedli L."/>
            <person name="Gu Z."/>
            <person name="Guan P."/>
            <person name="Guigo R."/>
            <person name="Hillenmeyer M.E."/>
            <person name="Hladun S.L."/>
            <person name="Hogan J.R."/>
            <person name="Hong Y.S."/>
            <person name="Hoover J."/>
            <person name="Jaillon O."/>
            <person name="Ke Z."/>
            <person name="Kodira C.D."/>
            <person name="Kokoza E."/>
            <person name="Koutsos A."/>
            <person name="Letunic I."/>
            <person name="Levitsky A.A."/>
            <person name="Liang Y."/>
            <person name="Lin J.-J."/>
            <person name="Lobo N.F."/>
            <person name="Lopez J.R."/>
            <person name="Malek J.A."/>
            <person name="McIntosh T.C."/>
            <person name="Meister S."/>
            <person name="Miller J.R."/>
            <person name="Mobarry C."/>
            <person name="Mongin E."/>
            <person name="Murphy S.D."/>
            <person name="O'Brochta D.A."/>
            <person name="Pfannkoch C."/>
            <person name="Qi R."/>
            <person name="Regier M.A."/>
            <person name="Remington K."/>
            <person name="Shao H."/>
            <person name="Sharakhova M.V."/>
            <person name="Sitter C.D."/>
            <person name="Shetty J."/>
            <person name="Smith T.J."/>
            <person name="Strong R."/>
            <person name="Sun J."/>
            <person name="Thomasova D."/>
            <person name="Ton L.Q."/>
            <person name="Topalis P."/>
            <person name="Tu Z.J."/>
            <person name="Unger M.F."/>
            <person name="Walenz B."/>
            <person name="Wang A.H."/>
            <person name="Wang J."/>
            <person name="Wang M."/>
            <person name="Wang X."/>
            <person name="Woodford K.J."/>
            <person name="Wortman J.R."/>
            <person name="Wu M."/>
            <person name="Yao A."/>
            <person name="Zdobnov E.M."/>
            <person name="Zhang H."/>
            <person name="Zhao Q."/>
            <person name="Zhao S."/>
            <person name="Zhu S.C."/>
            <person name="Zhimulev I."/>
            <person name="Coluzzi M."/>
            <person name="della Torre A."/>
            <person name="Roth C.W."/>
            <person name="Louis C."/>
            <person name="Kalush F."/>
            <person name="Mural R.J."/>
            <person name="Myers E.W."/>
            <person name="Adams M.D."/>
            <person name="Smith H.O."/>
            <person name="Broder S."/>
            <person name="Gardner M.J."/>
            <person name="Fraser C.M."/>
            <person name="Birney E."/>
            <person name="Bork P."/>
            <person name="Brey P.T."/>
            <person name="Venter J.C."/>
            <person name="Weissenbach J."/>
            <person name="Kafatos F.C."/>
            <person name="Collins F.H."/>
            <person name="Hoffman S.L."/>
        </authorList>
    </citation>
    <scope>NUCLEOTIDE SEQUENCE [LARGE SCALE GENOMIC DNA] OF 1-667</scope>
    <source>
        <strain>PEST</strain>
    </source>
</reference>
<reference key="4">
    <citation type="journal article" date="1996" name="Genetics">
        <title>Physical map of the malaria vector Anopheles gambiae.</title>
        <authorList>
            <person name="della Torre A."/>
            <person name="Favia G."/>
            <person name="Mariotti G."/>
            <person name="Coluzzi M."/>
            <person name="Mathiopoulos K.D."/>
        </authorList>
    </citation>
    <scope>NUCLEOTIDE SEQUENCE [MRNA] OF 333-588</scope>
    <source>
        <strain>Gasua</strain>
    </source>
</reference>